<name>PRMA_BRUME</name>
<accession>Q8YI53</accession>
<reference key="1">
    <citation type="journal article" date="2002" name="Proc. Natl. Acad. Sci. U.S.A.">
        <title>The genome sequence of the facultative intracellular pathogen Brucella melitensis.</title>
        <authorList>
            <person name="DelVecchio V.G."/>
            <person name="Kapatral V."/>
            <person name="Redkar R.J."/>
            <person name="Patra G."/>
            <person name="Mujer C."/>
            <person name="Los T."/>
            <person name="Ivanova N."/>
            <person name="Anderson I."/>
            <person name="Bhattacharyya A."/>
            <person name="Lykidis A."/>
            <person name="Reznik G."/>
            <person name="Jablonski L."/>
            <person name="Larsen N."/>
            <person name="D'Souza M."/>
            <person name="Bernal A."/>
            <person name="Mazur M."/>
            <person name="Goltsman E."/>
            <person name="Selkov E."/>
            <person name="Elzer P.H."/>
            <person name="Hagius S."/>
            <person name="O'Callaghan D."/>
            <person name="Letesson J.-J."/>
            <person name="Haselkorn R."/>
            <person name="Kyrpides N.C."/>
            <person name="Overbeek R."/>
        </authorList>
    </citation>
    <scope>NUCLEOTIDE SEQUENCE [LARGE SCALE GENOMIC DNA]</scope>
    <source>
        <strain>ATCC 23456 / CCUG 17765 / NCTC 10094 / 16M</strain>
    </source>
</reference>
<protein>
    <recommendedName>
        <fullName evidence="1">Ribosomal protein L11 methyltransferase</fullName>
        <shortName evidence="1">L11 Mtase</shortName>
        <ecNumber evidence="1">2.1.1.-</ecNumber>
    </recommendedName>
</protein>
<keyword id="KW-0963">Cytoplasm</keyword>
<keyword id="KW-0489">Methyltransferase</keyword>
<keyword id="KW-0949">S-adenosyl-L-methionine</keyword>
<keyword id="KW-0808">Transferase</keyword>
<evidence type="ECO:0000255" key="1">
    <source>
        <dbReference type="HAMAP-Rule" id="MF_00735"/>
    </source>
</evidence>
<proteinExistence type="inferred from homology"/>
<sequence length="285" mass="30584">MAQSRLFFSADKAEAERTYNILEQAFEDDGFPIAITEIDEDRQIFEVSVYVEDDAEEVAARVDALVGPGLFDTEELPDIDWVTHSLEGLKPVRAGHFFVHGSHDRDKIEPGDIAIEIDAGLAFGTGHHGTTAGCLELIEETVETEHPTNALDLGTGSAVLAIAIARLAPIPILATDIDPIAVTVAAENAAKNGVAEHIVTATAEGFGHPIFRSYSPFDLIVANILANPLIELAPSIKEHLAPGGSIILSGILDSQHDAVLAAYQTQGLTHQKTLHREGWVAIHLK</sequence>
<feature type="chain" id="PRO_0000192244" description="Ribosomal protein L11 methyltransferase">
    <location>
        <begin position="1"/>
        <end position="285"/>
    </location>
</feature>
<feature type="binding site" evidence="1">
    <location>
        <position position="131"/>
    </location>
    <ligand>
        <name>S-adenosyl-L-methionine</name>
        <dbReference type="ChEBI" id="CHEBI:59789"/>
    </ligand>
</feature>
<feature type="binding site" evidence="1">
    <location>
        <position position="154"/>
    </location>
    <ligand>
        <name>S-adenosyl-L-methionine</name>
        <dbReference type="ChEBI" id="CHEBI:59789"/>
    </ligand>
</feature>
<feature type="binding site" evidence="1">
    <location>
        <position position="176"/>
    </location>
    <ligand>
        <name>S-adenosyl-L-methionine</name>
        <dbReference type="ChEBI" id="CHEBI:59789"/>
    </ligand>
</feature>
<feature type="binding site" evidence="1">
    <location>
        <position position="223"/>
    </location>
    <ligand>
        <name>S-adenosyl-L-methionine</name>
        <dbReference type="ChEBI" id="CHEBI:59789"/>
    </ligand>
</feature>
<organism>
    <name type="scientific">Brucella melitensis biotype 1 (strain ATCC 23456 / CCUG 17765 / NCTC 10094 / 16M)</name>
    <dbReference type="NCBI Taxonomy" id="224914"/>
    <lineage>
        <taxon>Bacteria</taxon>
        <taxon>Pseudomonadati</taxon>
        <taxon>Pseudomonadota</taxon>
        <taxon>Alphaproteobacteria</taxon>
        <taxon>Hyphomicrobiales</taxon>
        <taxon>Brucellaceae</taxon>
        <taxon>Brucella/Ochrobactrum group</taxon>
        <taxon>Brucella</taxon>
    </lineage>
</organism>
<dbReference type="EC" id="2.1.1.-" evidence="1"/>
<dbReference type="EMBL" id="AE008917">
    <property type="protein sequence ID" value="AAL51773.1"/>
    <property type="molecule type" value="Genomic_DNA"/>
</dbReference>
<dbReference type="PIR" id="AB3326">
    <property type="entry name" value="AB3326"/>
</dbReference>
<dbReference type="RefSeq" id="WP_002964525.1">
    <property type="nucleotide sequence ID" value="NZ_GG703780.1"/>
</dbReference>
<dbReference type="SMR" id="Q8YI53"/>
<dbReference type="KEGG" id="bme:BMEI0592"/>
<dbReference type="KEGG" id="bmel:DK63_834"/>
<dbReference type="PATRIC" id="fig|224914.52.peg.876"/>
<dbReference type="eggNOG" id="COG2264">
    <property type="taxonomic scope" value="Bacteria"/>
</dbReference>
<dbReference type="PhylomeDB" id="Q8YI53"/>
<dbReference type="Proteomes" id="UP000000419">
    <property type="component" value="Chromosome I"/>
</dbReference>
<dbReference type="GO" id="GO:0005737">
    <property type="term" value="C:cytoplasm"/>
    <property type="evidence" value="ECO:0007669"/>
    <property type="project" value="UniProtKB-SubCell"/>
</dbReference>
<dbReference type="GO" id="GO:0016279">
    <property type="term" value="F:protein-lysine N-methyltransferase activity"/>
    <property type="evidence" value="ECO:0007669"/>
    <property type="project" value="RHEA"/>
</dbReference>
<dbReference type="GO" id="GO:0032259">
    <property type="term" value="P:methylation"/>
    <property type="evidence" value="ECO:0007669"/>
    <property type="project" value="UniProtKB-KW"/>
</dbReference>
<dbReference type="CDD" id="cd02440">
    <property type="entry name" value="AdoMet_MTases"/>
    <property type="match status" value="1"/>
</dbReference>
<dbReference type="Gene3D" id="3.40.50.150">
    <property type="entry name" value="Vaccinia Virus protein VP39"/>
    <property type="match status" value="1"/>
</dbReference>
<dbReference type="HAMAP" id="MF_00735">
    <property type="entry name" value="Methyltr_PrmA"/>
    <property type="match status" value="1"/>
</dbReference>
<dbReference type="InterPro" id="IPR050078">
    <property type="entry name" value="Ribosomal_L11_MeTrfase_PrmA"/>
</dbReference>
<dbReference type="InterPro" id="IPR004498">
    <property type="entry name" value="Ribosomal_PrmA_MeTrfase"/>
</dbReference>
<dbReference type="InterPro" id="IPR029063">
    <property type="entry name" value="SAM-dependent_MTases_sf"/>
</dbReference>
<dbReference type="NCBIfam" id="NF001784">
    <property type="entry name" value="PRK00517.2-1"/>
    <property type="match status" value="1"/>
</dbReference>
<dbReference type="PANTHER" id="PTHR43648">
    <property type="entry name" value="ELECTRON TRANSFER FLAVOPROTEIN BETA SUBUNIT LYSINE METHYLTRANSFERASE"/>
    <property type="match status" value="1"/>
</dbReference>
<dbReference type="PANTHER" id="PTHR43648:SF1">
    <property type="entry name" value="ELECTRON TRANSFER FLAVOPROTEIN BETA SUBUNIT LYSINE METHYLTRANSFERASE"/>
    <property type="match status" value="1"/>
</dbReference>
<dbReference type="Pfam" id="PF06325">
    <property type="entry name" value="PrmA"/>
    <property type="match status" value="1"/>
</dbReference>
<dbReference type="PIRSF" id="PIRSF000401">
    <property type="entry name" value="RPL11_MTase"/>
    <property type="match status" value="1"/>
</dbReference>
<dbReference type="SUPFAM" id="SSF53335">
    <property type="entry name" value="S-adenosyl-L-methionine-dependent methyltransferases"/>
    <property type="match status" value="1"/>
</dbReference>
<gene>
    <name evidence="1" type="primary">prmA</name>
    <name type="ordered locus">BMEI0592</name>
</gene>
<comment type="function">
    <text evidence="1">Methylates ribosomal protein L11.</text>
</comment>
<comment type="catalytic activity">
    <reaction evidence="1">
        <text>L-lysyl-[protein] + 3 S-adenosyl-L-methionine = N(6),N(6),N(6)-trimethyl-L-lysyl-[protein] + 3 S-adenosyl-L-homocysteine + 3 H(+)</text>
        <dbReference type="Rhea" id="RHEA:54192"/>
        <dbReference type="Rhea" id="RHEA-COMP:9752"/>
        <dbReference type="Rhea" id="RHEA-COMP:13826"/>
        <dbReference type="ChEBI" id="CHEBI:15378"/>
        <dbReference type="ChEBI" id="CHEBI:29969"/>
        <dbReference type="ChEBI" id="CHEBI:57856"/>
        <dbReference type="ChEBI" id="CHEBI:59789"/>
        <dbReference type="ChEBI" id="CHEBI:61961"/>
    </reaction>
</comment>
<comment type="subcellular location">
    <subcellularLocation>
        <location evidence="1">Cytoplasm</location>
    </subcellularLocation>
</comment>
<comment type="similarity">
    <text evidence="1">Belongs to the methyltransferase superfamily. PrmA family.</text>
</comment>